<dbReference type="EC" id="4.2.1.20" evidence="1"/>
<dbReference type="EMBL" id="CP000608">
    <property type="protein sequence ID" value="ABO46027.1"/>
    <property type="molecule type" value="Genomic_DNA"/>
</dbReference>
<dbReference type="RefSeq" id="WP_003024391.1">
    <property type="nucleotide sequence ID" value="NC_009257.1"/>
</dbReference>
<dbReference type="SMR" id="A4IVS5"/>
<dbReference type="KEGG" id="ftw:FTW_0013"/>
<dbReference type="HOGENOM" id="CLU_016734_0_4_6"/>
<dbReference type="UniPathway" id="UPA00035">
    <property type="reaction ID" value="UER00044"/>
</dbReference>
<dbReference type="GO" id="GO:0005829">
    <property type="term" value="C:cytosol"/>
    <property type="evidence" value="ECO:0007669"/>
    <property type="project" value="TreeGrafter"/>
</dbReference>
<dbReference type="GO" id="GO:0004834">
    <property type="term" value="F:tryptophan synthase activity"/>
    <property type="evidence" value="ECO:0007669"/>
    <property type="project" value="UniProtKB-UniRule"/>
</dbReference>
<dbReference type="CDD" id="cd04724">
    <property type="entry name" value="Tryptophan_synthase_alpha"/>
    <property type="match status" value="1"/>
</dbReference>
<dbReference type="FunFam" id="3.20.20.70:FF:000037">
    <property type="entry name" value="Tryptophan synthase alpha chain"/>
    <property type="match status" value="1"/>
</dbReference>
<dbReference type="Gene3D" id="3.20.20.70">
    <property type="entry name" value="Aldolase class I"/>
    <property type="match status" value="1"/>
</dbReference>
<dbReference type="HAMAP" id="MF_00131">
    <property type="entry name" value="Trp_synth_alpha"/>
    <property type="match status" value="1"/>
</dbReference>
<dbReference type="InterPro" id="IPR013785">
    <property type="entry name" value="Aldolase_TIM"/>
</dbReference>
<dbReference type="InterPro" id="IPR011060">
    <property type="entry name" value="RibuloseP-bd_barrel"/>
</dbReference>
<dbReference type="InterPro" id="IPR018204">
    <property type="entry name" value="Trp_synthase_alpha_AS"/>
</dbReference>
<dbReference type="InterPro" id="IPR002028">
    <property type="entry name" value="Trp_synthase_suA"/>
</dbReference>
<dbReference type="NCBIfam" id="TIGR00262">
    <property type="entry name" value="trpA"/>
    <property type="match status" value="1"/>
</dbReference>
<dbReference type="PANTHER" id="PTHR43406:SF1">
    <property type="entry name" value="TRYPTOPHAN SYNTHASE ALPHA CHAIN, CHLOROPLASTIC"/>
    <property type="match status" value="1"/>
</dbReference>
<dbReference type="PANTHER" id="PTHR43406">
    <property type="entry name" value="TRYPTOPHAN SYNTHASE, ALPHA CHAIN"/>
    <property type="match status" value="1"/>
</dbReference>
<dbReference type="Pfam" id="PF00290">
    <property type="entry name" value="Trp_syntA"/>
    <property type="match status" value="1"/>
</dbReference>
<dbReference type="SUPFAM" id="SSF51366">
    <property type="entry name" value="Ribulose-phoshate binding barrel"/>
    <property type="match status" value="1"/>
</dbReference>
<dbReference type="PROSITE" id="PS00167">
    <property type="entry name" value="TRP_SYNTHASE_ALPHA"/>
    <property type="match status" value="1"/>
</dbReference>
<reference key="1">
    <citation type="journal article" date="2007" name="PLoS ONE">
        <title>Complete genomic characterization of a pathogenic A.II strain of Francisella tularensis subspecies tularensis.</title>
        <authorList>
            <person name="Beckstrom-Sternberg S.M."/>
            <person name="Auerbach R.K."/>
            <person name="Godbole S."/>
            <person name="Pearson J.V."/>
            <person name="Beckstrom-Sternberg J.S."/>
            <person name="Deng Z."/>
            <person name="Munk C."/>
            <person name="Kubota K."/>
            <person name="Zhou Y."/>
            <person name="Bruce D."/>
            <person name="Noronha J."/>
            <person name="Scheuermann R.H."/>
            <person name="Wang A."/>
            <person name="Wei X."/>
            <person name="Wang J."/>
            <person name="Hao J."/>
            <person name="Wagner D.M."/>
            <person name="Brettin T.S."/>
            <person name="Brown N."/>
            <person name="Gilna P."/>
            <person name="Keim P.S."/>
        </authorList>
    </citation>
    <scope>NUCLEOTIDE SEQUENCE [LARGE SCALE GENOMIC DNA]</scope>
    <source>
        <strain>WY96-3418</strain>
    </source>
</reference>
<feature type="chain" id="PRO_1000018206" description="Tryptophan synthase alpha chain">
    <location>
        <begin position="1"/>
        <end position="269"/>
    </location>
</feature>
<feature type="active site" description="Proton acceptor" evidence="1">
    <location>
        <position position="50"/>
    </location>
</feature>
<feature type="active site" description="Proton acceptor" evidence="1">
    <location>
        <position position="61"/>
    </location>
</feature>
<proteinExistence type="inferred from homology"/>
<gene>
    <name evidence="1" type="primary">trpA</name>
    <name type="ordered locus">FTW_0013</name>
</gene>
<name>TRPA_FRATW</name>
<evidence type="ECO:0000255" key="1">
    <source>
        <dbReference type="HAMAP-Rule" id="MF_00131"/>
    </source>
</evidence>
<keyword id="KW-0028">Amino-acid biosynthesis</keyword>
<keyword id="KW-0057">Aromatic amino acid biosynthesis</keyword>
<keyword id="KW-0456">Lyase</keyword>
<keyword id="KW-0822">Tryptophan biosynthesis</keyword>
<protein>
    <recommendedName>
        <fullName evidence="1">Tryptophan synthase alpha chain</fullName>
        <ecNumber evidence="1">4.2.1.20</ecNumber>
    </recommendedName>
</protein>
<accession>A4IVS5</accession>
<comment type="function">
    <text evidence="1">The alpha subunit is responsible for the aldol cleavage of indoleglycerol phosphate to indole and glyceraldehyde 3-phosphate.</text>
</comment>
<comment type="catalytic activity">
    <reaction evidence="1">
        <text>(1S,2R)-1-C-(indol-3-yl)glycerol 3-phosphate + L-serine = D-glyceraldehyde 3-phosphate + L-tryptophan + H2O</text>
        <dbReference type="Rhea" id="RHEA:10532"/>
        <dbReference type="ChEBI" id="CHEBI:15377"/>
        <dbReference type="ChEBI" id="CHEBI:33384"/>
        <dbReference type="ChEBI" id="CHEBI:57912"/>
        <dbReference type="ChEBI" id="CHEBI:58866"/>
        <dbReference type="ChEBI" id="CHEBI:59776"/>
        <dbReference type="EC" id="4.2.1.20"/>
    </reaction>
</comment>
<comment type="pathway">
    <text evidence="1">Amino-acid biosynthesis; L-tryptophan biosynthesis; L-tryptophan from chorismate: step 5/5.</text>
</comment>
<comment type="subunit">
    <text evidence="1">Tetramer of two alpha and two beta chains.</text>
</comment>
<comment type="similarity">
    <text evidence="1">Belongs to the TrpA family.</text>
</comment>
<organism>
    <name type="scientific">Francisella tularensis subsp. tularensis (strain WY96-3418)</name>
    <dbReference type="NCBI Taxonomy" id="418136"/>
    <lineage>
        <taxon>Bacteria</taxon>
        <taxon>Pseudomonadati</taxon>
        <taxon>Pseudomonadota</taxon>
        <taxon>Gammaproteobacteria</taxon>
        <taxon>Thiotrichales</taxon>
        <taxon>Francisellaceae</taxon>
        <taxon>Francisella</taxon>
    </lineage>
</organism>
<sequence length="269" mass="29098">MTNRYTTLFANLEKRNEGAFIPFVTIGDPNKALSFEIIDTLVSSGADALELGIPFSDPLADGPTIQEANIRALESGITPKDCFDILTKIRAKYPHIPIGLLLYANLVYANGIENFYQKCLDAGVDSILIADVPAHESKEFRDIAKKVSIAQIFIAPPDASESTLKQISELGSGYTYLLSRVGVTGTETAANMPVEDVLTKLREYNAPKPVLGFGISKPEQVQQAIKAGAAGAISGSATVKIIQNNISNKQKMLNELTYFVKEMKAATLN</sequence>